<sequence length="120" mass="13810">MNVQAIIKDIESEYLKTDLPTIHVGDTVRVGVRIREGGKERVQPYEGTVIAMRNGGINETITVRRVFQGVGVERVFLLHSPRVADIKVVRRGKVRRAKLYYLRNRVGKATRIRQRFDRPV</sequence>
<feature type="chain" id="PRO_1000134566" description="Large ribosomal subunit protein bL19">
    <location>
        <begin position="1"/>
        <end position="120"/>
    </location>
</feature>
<comment type="function">
    <text evidence="1">This protein is located at the 30S-50S ribosomal subunit interface and may play a role in the structure and function of the aminoacyl-tRNA binding site.</text>
</comment>
<comment type="similarity">
    <text evidence="1">Belongs to the bacterial ribosomal protein bL19 family.</text>
</comment>
<protein>
    <recommendedName>
        <fullName evidence="1">Large ribosomal subunit protein bL19</fullName>
    </recommendedName>
    <alternativeName>
        <fullName evidence="2">50S ribosomal protein L19</fullName>
    </alternativeName>
</protein>
<proteinExistence type="inferred from homology"/>
<reference key="1">
    <citation type="journal article" date="2008" name="Proc. Natl. Acad. Sci. U.S.A.">
        <title>The genome of Cyanothece 51142, a unicellular diazotrophic cyanobacterium important in the marine nitrogen cycle.</title>
        <authorList>
            <person name="Welsh E.A."/>
            <person name="Liberton M."/>
            <person name="Stoeckel J."/>
            <person name="Loh T."/>
            <person name="Elvitigala T."/>
            <person name="Wang C."/>
            <person name="Wollam A."/>
            <person name="Fulton R.S."/>
            <person name="Clifton S.W."/>
            <person name="Jacobs J.M."/>
            <person name="Aurora R."/>
            <person name="Ghosh B.K."/>
            <person name="Sherman L.A."/>
            <person name="Smith R.D."/>
            <person name="Wilson R.K."/>
            <person name="Pakrasi H.B."/>
        </authorList>
    </citation>
    <scope>NUCLEOTIDE SEQUENCE [LARGE SCALE GENOMIC DNA]</scope>
    <source>
        <strain>ATCC 51142 / BH68</strain>
    </source>
</reference>
<organism>
    <name type="scientific">Crocosphaera subtropica (strain ATCC 51142 / BH68)</name>
    <name type="common">Cyanothece sp. (strain ATCC 51142)</name>
    <dbReference type="NCBI Taxonomy" id="43989"/>
    <lineage>
        <taxon>Bacteria</taxon>
        <taxon>Bacillati</taxon>
        <taxon>Cyanobacteriota</taxon>
        <taxon>Cyanophyceae</taxon>
        <taxon>Oscillatoriophycideae</taxon>
        <taxon>Chroococcales</taxon>
        <taxon>Aphanothecaceae</taxon>
        <taxon>Crocosphaera</taxon>
        <taxon>Crocosphaera subtropica</taxon>
    </lineage>
</organism>
<keyword id="KW-1185">Reference proteome</keyword>
<keyword id="KW-0687">Ribonucleoprotein</keyword>
<keyword id="KW-0689">Ribosomal protein</keyword>
<gene>
    <name evidence="1" type="primary">rplS</name>
    <name evidence="1" type="synonym">rpl19</name>
    <name type="ordered locus">cce_0801</name>
</gene>
<name>RL19_CROS5</name>
<evidence type="ECO:0000255" key="1">
    <source>
        <dbReference type="HAMAP-Rule" id="MF_00402"/>
    </source>
</evidence>
<evidence type="ECO:0000305" key="2"/>
<dbReference type="EMBL" id="CP000806">
    <property type="protein sequence ID" value="ACB50152.1"/>
    <property type="molecule type" value="Genomic_DNA"/>
</dbReference>
<dbReference type="RefSeq" id="WP_009546040.1">
    <property type="nucleotide sequence ID" value="NC_010546.1"/>
</dbReference>
<dbReference type="SMR" id="B1WR94"/>
<dbReference type="STRING" id="43989.cce_0801"/>
<dbReference type="KEGG" id="cyt:cce_0801"/>
<dbReference type="eggNOG" id="COG0335">
    <property type="taxonomic scope" value="Bacteria"/>
</dbReference>
<dbReference type="HOGENOM" id="CLU_103507_2_0_3"/>
<dbReference type="OrthoDB" id="9803541at2"/>
<dbReference type="Proteomes" id="UP000001203">
    <property type="component" value="Chromosome circular"/>
</dbReference>
<dbReference type="GO" id="GO:0022625">
    <property type="term" value="C:cytosolic large ribosomal subunit"/>
    <property type="evidence" value="ECO:0007669"/>
    <property type="project" value="TreeGrafter"/>
</dbReference>
<dbReference type="GO" id="GO:0003735">
    <property type="term" value="F:structural constituent of ribosome"/>
    <property type="evidence" value="ECO:0007669"/>
    <property type="project" value="InterPro"/>
</dbReference>
<dbReference type="GO" id="GO:0006412">
    <property type="term" value="P:translation"/>
    <property type="evidence" value="ECO:0007669"/>
    <property type="project" value="UniProtKB-UniRule"/>
</dbReference>
<dbReference type="FunFam" id="2.30.30.790:FF:000001">
    <property type="entry name" value="50S ribosomal protein L19"/>
    <property type="match status" value="1"/>
</dbReference>
<dbReference type="Gene3D" id="2.30.30.790">
    <property type="match status" value="1"/>
</dbReference>
<dbReference type="HAMAP" id="MF_00402">
    <property type="entry name" value="Ribosomal_bL19"/>
    <property type="match status" value="1"/>
</dbReference>
<dbReference type="InterPro" id="IPR001857">
    <property type="entry name" value="Ribosomal_bL19"/>
</dbReference>
<dbReference type="InterPro" id="IPR018257">
    <property type="entry name" value="Ribosomal_bL19_CS"/>
</dbReference>
<dbReference type="InterPro" id="IPR038657">
    <property type="entry name" value="Ribosomal_bL19_sf"/>
</dbReference>
<dbReference type="InterPro" id="IPR008991">
    <property type="entry name" value="Translation_prot_SH3-like_sf"/>
</dbReference>
<dbReference type="NCBIfam" id="TIGR01024">
    <property type="entry name" value="rplS_bact"/>
    <property type="match status" value="1"/>
</dbReference>
<dbReference type="PANTHER" id="PTHR15680:SF9">
    <property type="entry name" value="LARGE RIBOSOMAL SUBUNIT PROTEIN BL19M"/>
    <property type="match status" value="1"/>
</dbReference>
<dbReference type="PANTHER" id="PTHR15680">
    <property type="entry name" value="RIBOSOMAL PROTEIN L19"/>
    <property type="match status" value="1"/>
</dbReference>
<dbReference type="Pfam" id="PF01245">
    <property type="entry name" value="Ribosomal_L19"/>
    <property type="match status" value="1"/>
</dbReference>
<dbReference type="PIRSF" id="PIRSF002191">
    <property type="entry name" value="Ribosomal_L19"/>
    <property type="match status" value="1"/>
</dbReference>
<dbReference type="PRINTS" id="PR00061">
    <property type="entry name" value="RIBOSOMALL19"/>
</dbReference>
<dbReference type="SUPFAM" id="SSF50104">
    <property type="entry name" value="Translation proteins SH3-like domain"/>
    <property type="match status" value="1"/>
</dbReference>
<dbReference type="PROSITE" id="PS01015">
    <property type="entry name" value="RIBOSOMAL_L19"/>
    <property type="match status" value="1"/>
</dbReference>
<accession>B1WR94</accession>